<keyword id="KW-0004">4Fe-4S</keyword>
<keyword id="KW-0997">Cell inner membrane</keyword>
<keyword id="KW-1003">Cell membrane</keyword>
<keyword id="KW-0408">Iron</keyword>
<keyword id="KW-0411">Iron-sulfur</keyword>
<keyword id="KW-0472">Membrane</keyword>
<keyword id="KW-0479">Metal-binding</keyword>
<keyword id="KW-0520">NAD</keyword>
<keyword id="KW-0874">Quinone</keyword>
<keyword id="KW-1185">Reference proteome</keyword>
<keyword id="KW-1278">Translocase</keyword>
<keyword id="KW-0813">Transport</keyword>
<keyword id="KW-0830">Ubiquinone</keyword>
<gene>
    <name evidence="2" type="primary">nuoB</name>
    <name type="ordered locus">H16_A1051</name>
</gene>
<protein>
    <recommendedName>
        <fullName evidence="2">NADH-quinone oxidoreductase subunit B</fullName>
        <ecNumber evidence="2">7.1.1.-</ecNumber>
    </recommendedName>
    <alternativeName>
        <fullName evidence="2">NADH dehydrogenase I subunit B</fullName>
    </alternativeName>
    <alternativeName>
        <fullName evidence="2">NDH-1 subunit B</fullName>
    </alternativeName>
</protein>
<name>NUOB_CUPNH</name>
<sequence length="160" mass="17635">MAIEGVLNEGFVTTTADKLINWTRTGSLWPMTFGLACCAVEMMHAGAARYDMDRFGVIFRPSPRQSDVMIVAGTLCNKMAPALRKVYDQMAEPRWVISMGSCANGGGYYHYSYSVVRGCDRIVPVDIYVPGCPPTAEALIYGVIQLQNKIKRTNTIARKG</sequence>
<evidence type="ECO:0000250" key="1"/>
<evidence type="ECO:0000255" key="2">
    <source>
        <dbReference type="HAMAP-Rule" id="MF_01356"/>
    </source>
</evidence>
<reference key="1">
    <citation type="journal article" date="2006" name="Nat. Biotechnol.">
        <title>Genome sequence of the bioplastic-producing 'Knallgas' bacterium Ralstonia eutropha H16.</title>
        <authorList>
            <person name="Pohlmann A."/>
            <person name="Fricke W.F."/>
            <person name="Reinecke F."/>
            <person name="Kusian B."/>
            <person name="Liesegang H."/>
            <person name="Cramm R."/>
            <person name="Eitinger T."/>
            <person name="Ewering C."/>
            <person name="Poetter M."/>
            <person name="Schwartz E."/>
            <person name="Strittmatter A."/>
            <person name="Voss I."/>
            <person name="Gottschalk G."/>
            <person name="Steinbuechel A."/>
            <person name="Friedrich B."/>
            <person name="Bowien B."/>
        </authorList>
    </citation>
    <scope>NUCLEOTIDE SEQUENCE [LARGE SCALE GENOMIC DNA]</scope>
    <source>
        <strain>ATCC 17699 / DSM 428 / KCTC 22496 / NCIMB 10442 / H16 / Stanier 337</strain>
    </source>
</reference>
<proteinExistence type="inferred from homology"/>
<feature type="chain" id="PRO_0000358460" description="NADH-quinone oxidoreductase subunit B">
    <location>
        <begin position="1"/>
        <end position="160"/>
    </location>
</feature>
<feature type="binding site" evidence="2">
    <location>
        <position position="37"/>
    </location>
    <ligand>
        <name>[4Fe-4S] cluster</name>
        <dbReference type="ChEBI" id="CHEBI:49883"/>
    </ligand>
</feature>
<feature type="binding site" evidence="2">
    <location>
        <position position="38"/>
    </location>
    <ligand>
        <name>[4Fe-4S] cluster</name>
        <dbReference type="ChEBI" id="CHEBI:49883"/>
    </ligand>
</feature>
<feature type="binding site" evidence="2">
    <location>
        <position position="102"/>
    </location>
    <ligand>
        <name>[4Fe-4S] cluster</name>
        <dbReference type="ChEBI" id="CHEBI:49883"/>
    </ligand>
</feature>
<feature type="binding site" evidence="2">
    <location>
        <position position="132"/>
    </location>
    <ligand>
        <name>[4Fe-4S] cluster</name>
        <dbReference type="ChEBI" id="CHEBI:49883"/>
    </ligand>
</feature>
<comment type="function">
    <text evidence="1">NDH-1 shuttles electrons from NADH, via FMN and iron-sulfur (Fe-S) centers, to quinones in the respiratory chain. Couples the redox reaction to proton translocation (for every two electrons transferred, four hydrogen ions are translocated across the cytoplasmic membrane), and thus conserves the redox energy in a proton gradient (By similarity).</text>
</comment>
<comment type="catalytic activity">
    <reaction evidence="2">
        <text>a quinone + NADH + 5 H(+)(in) = a quinol + NAD(+) + 4 H(+)(out)</text>
        <dbReference type="Rhea" id="RHEA:57888"/>
        <dbReference type="ChEBI" id="CHEBI:15378"/>
        <dbReference type="ChEBI" id="CHEBI:24646"/>
        <dbReference type="ChEBI" id="CHEBI:57540"/>
        <dbReference type="ChEBI" id="CHEBI:57945"/>
        <dbReference type="ChEBI" id="CHEBI:132124"/>
    </reaction>
</comment>
<comment type="cofactor">
    <cofactor evidence="2">
        <name>[4Fe-4S] cluster</name>
        <dbReference type="ChEBI" id="CHEBI:49883"/>
    </cofactor>
    <text evidence="2">Binds 1 [4Fe-4S] cluster.</text>
</comment>
<comment type="subunit">
    <text evidence="2">NDH-1 is composed of 14 different subunits. Subunits NuoB, C, D, E, F, and G constitute the peripheral sector of the complex.</text>
</comment>
<comment type="subcellular location">
    <subcellularLocation>
        <location evidence="2">Cell inner membrane</location>
        <topology evidence="2">Peripheral membrane protein</topology>
        <orientation evidence="2">Cytoplasmic side</orientation>
    </subcellularLocation>
</comment>
<comment type="similarity">
    <text evidence="2">Belongs to the complex I 20 kDa subunit family.</text>
</comment>
<accession>Q0KCS9</accession>
<dbReference type="EC" id="7.1.1.-" evidence="2"/>
<dbReference type="EMBL" id="AM260479">
    <property type="protein sequence ID" value="CAJ92192.1"/>
    <property type="molecule type" value="Genomic_DNA"/>
</dbReference>
<dbReference type="RefSeq" id="WP_008643342.1">
    <property type="nucleotide sequence ID" value="NZ_CP039287.1"/>
</dbReference>
<dbReference type="SMR" id="Q0KCS9"/>
<dbReference type="STRING" id="381666.H16_A1051"/>
<dbReference type="KEGG" id="reh:H16_A1051"/>
<dbReference type="eggNOG" id="COG0377">
    <property type="taxonomic scope" value="Bacteria"/>
</dbReference>
<dbReference type="HOGENOM" id="CLU_055737_7_3_4"/>
<dbReference type="OrthoDB" id="9786737at2"/>
<dbReference type="Proteomes" id="UP000008210">
    <property type="component" value="Chromosome 1"/>
</dbReference>
<dbReference type="GO" id="GO:0005886">
    <property type="term" value="C:plasma membrane"/>
    <property type="evidence" value="ECO:0007669"/>
    <property type="project" value="UniProtKB-SubCell"/>
</dbReference>
<dbReference type="GO" id="GO:0045271">
    <property type="term" value="C:respiratory chain complex I"/>
    <property type="evidence" value="ECO:0007669"/>
    <property type="project" value="TreeGrafter"/>
</dbReference>
<dbReference type="GO" id="GO:0051539">
    <property type="term" value="F:4 iron, 4 sulfur cluster binding"/>
    <property type="evidence" value="ECO:0007669"/>
    <property type="project" value="UniProtKB-KW"/>
</dbReference>
<dbReference type="GO" id="GO:0005506">
    <property type="term" value="F:iron ion binding"/>
    <property type="evidence" value="ECO:0007669"/>
    <property type="project" value="UniProtKB-UniRule"/>
</dbReference>
<dbReference type="GO" id="GO:0008137">
    <property type="term" value="F:NADH dehydrogenase (ubiquinone) activity"/>
    <property type="evidence" value="ECO:0007669"/>
    <property type="project" value="InterPro"/>
</dbReference>
<dbReference type="GO" id="GO:0050136">
    <property type="term" value="F:NADH:ubiquinone reductase (non-electrogenic) activity"/>
    <property type="evidence" value="ECO:0007669"/>
    <property type="project" value="UniProtKB-UniRule"/>
</dbReference>
<dbReference type="GO" id="GO:0048038">
    <property type="term" value="F:quinone binding"/>
    <property type="evidence" value="ECO:0007669"/>
    <property type="project" value="UniProtKB-KW"/>
</dbReference>
<dbReference type="GO" id="GO:0009060">
    <property type="term" value="P:aerobic respiration"/>
    <property type="evidence" value="ECO:0007669"/>
    <property type="project" value="TreeGrafter"/>
</dbReference>
<dbReference type="GO" id="GO:0015990">
    <property type="term" value="P:electron transport coupled proton transport"/>
    <property type="evidence" value="ECO:0007669"/>
    <property type="project" value="TreeGrafter"/>
</dbReference>
<dbReference type="FunFam" id="3.40.50.12280:FF:000001">
    <property type="entry name" value="NADH-quinone oxidoreductase subunit B 2"/>
    <property type="match status" value="1"/>
</dbReference>
<dbReference type="Gene3D" id="3.40.50.12280">
    <property type="match status" value="1"/>
</dbReference>
<dbReference type="HAMAP" id="MF_01356">
    <property type="entry name" value="NDH1_NuoB"/>
    <property type="match status" value="1"/>
</dbReference>
<dbReference type="InterPro" id="IPR006137">
    <property type="entry name" value="NADH_UbQ_OxRdtase-like_20kDa"/>
</dbReference>
<dbReference type="InterPro" id="IPR006138">
    <property type="entry name" value="NADH_UQ_OxRdtase_20Kd_su"/>
</dbReference>
<dbReference type="NCBIfam" id="TIGR01957">
    <property type="entry name" value="nuoB_fam"/>
    <property type="match status" value="1"/>
</dbReference>
<dbReference type="NCBIfam" id="NF005012">
    <property type="entry name" value="PRK06411.1"/>
    <property type="match status" value="1"/>
</dbReference>
<dbReference type="PANTHER" id="PTHR11995">
    <property type="entry name" value="NADH DEHYDROGENASE"/>
    <property type="match status" value="1"/>
</dbReference>
<dbReference type="PANTHER" id="PTHR11995:SF14">
    <property type="entry name" value="NADH DEHYDROGENASE [UBIQUINONE] IRON-SULFUR PROTEIN 7, MITOCHONDRIAL"/>
    <property type="match status" value="1"/>
</dbReference>
<dbReference type="Pfam" id="PF01058">
    <property type="entry name" value="Oxidored_q6"/>
    <property type="match status" value="1"/>
</dbReference>
<dbReference type="SUPFAM" id="SSF56770">
    <property type="entry name" value="HydA/Nqo6-like"/>
    <property type="match status" value="1"/>
</dbReference>
<dbReference type="PROSITE" id="PS01150">
    <property type="entry name" value="COMPLEX1_20K"/>
    <property type="match status" value="1"/>
</dbReference>
<organism>
    <name type="scientific">Cupriavidus necator (strain ATCC 17699 / DSM 428 / KCTC 22496 / NCIMB 10442 / H16 / Stanier 337)</name>
    <name type="common">Ralstonia eutropha</name>
    <dbReference type="NCBI Taxonomy" id="381666"/>
    <lineage>
        <taxon>Bacteria</taxon>
        <taxon>Pseudomonadati</taxon>
        <taxon>Pseudomonadota</taxon>
        <taxon>Betaproteobacteria</taxon>
        <taxon>Burkholderiales</taxon>
        <taxon>Burkholderiaceae</taxon>
        <taxon>Cupriavidus</taxon>
    </lineage>
</organism>